<evidence type="ECO:0000305" key="1"/>
<accession>P18204</accession>
<reference key="1">
    <citation type="journal article" date="1990" name="Proc. Natl. Acad. Sci. U.S.A.">
        <title>Expression and fine structure of the gene encoding N epsilon-(indole-3-acetyl)-L-lysine synthetase from Pseudomonas savastanoi.</title>
        <authorList>
            <person name="Roberto F."/>
            <person name="Klee H."/>
            <person name="White F."/>
            <person name="Nordeen R."/>
            <person name="Kosuge T."/>
        </authorList>
    </citation>
    <scope>NUCLEOTIDE SEQUENCE [GENOMIC DNA]</scope>
    <source>
        <strain>EW2009</strain>
    </source>
</reference>
<dbReference type="EC" id="6.3.2.20"/>
<dbReference type="EMBL" id="M35373">
    <property type="protein sequence ID" value="AAA25850.1"/>
    <property type="molecule type" value="Genomic_DNA"/>
</dbReference>
<dbReference type="PIR" id="A35961">
    <property type="entry name" value="A35961"/>
</dbReference>
<dbReference type="SMR" id="P18204"/>
<dbReference type="KEGG" id="ag:AAA25850"/>
<dbReference type="GO" id="GO:0005524">
    <property type="term" value="F:ATP binding"/>
    <property type="evidence" value="ECO:0007669"/>
    <property type="project" value="UniProtKB-KW"/>
</dbReference>
<dbReference type="GO" id="GO:0047721">
    <property type="term" value="F:indoleacetate-lysine synthetase activity"/>
    <property type="evidence" value="ECO:0007669"/>
    <property type="project" value="UniProtKB-EC"/>
</dbReference>
<dbReference type="GO" id="GO:0009851">
    <property type="term" value="P:auxin biosynthetic process"/>
    <property type="evidence" value="ECO:0007669"/>
    <property type="project" value="UniProtKB-KW"/>
</dbReference>
<dbReference type="Gene3D" id="3.40.50.12780">
    <property type="entry name" value="N-terminal domain of ligase-like"/>
    <property type="match status" value="1"/>
</dbReference>
<dbReference type="InterPro" id="IPR020845">
    <property type="entry name" value="AMP-binding_CS"/>
</dbReference>
<dbReference type="InterPro" id="IPR000873">
    <property type="entry name" value="AMP-dep_synth/lig_dom"/>
</dbReference>
<dbReference type="InterPro" id="IPR042099">
    <property type="entry name" value="ANL_N_sf"/>
</dbReference>
<dbReference type="InterPro" id="IPR053158">
    <property type="entry name" value="CapK_Type1_Caps_Biosynth"/>
</dbReference>
<dbReference type="PANTHER" id="PTHR36932">
    <property type="entry name" value="CAPSULAR POLYSACCHARIDE BIOSYNTHESIS PROTEIN"/>
    <property type="match status" value="1"/>
</dbReference>
<dbReference type="PANTHER" id="PTHR36932:SF1">
    <property type="entry name" value="CAPSULAR POLYSACCHARIDE BIOSYNTHESIS PROTEIN"/>
    <property type="match status" value="1"/>
</dbReference>
<dbReference type="Pfam" id="PF00501">
    <property type="entry name" value="AMP-binding"/>
    <property type="match status" value="1"/>
</dbReference>
<dbReference type="SUPFAM" id="SSF56801">
    <property type="entry name" value="Acetyl-CoA synthetase-like"/>
    <property type="match status" value="1"/>
</dbReference>
<dbReference type="PROSITE" id="PS00455">
    <property type="entry name" value="AMP_BINDING"/>
    <property type="match status" value="1"/>
</dbReference>
<name>IAAL_PSESS</name>
<sequence>MTAYDMEKEWSRISITAAKIHQNNDFEGFTYQDFRTHVPIMDKDGFAAQTERCLERNERNCLIGFTSGTSGNIKRCYYYYDCEVDEDSSLSNVFRSNGFILPGDRCANLFTINLFSALNNTITMMAGNCGAHVVSVGDITLVTKSHFEALNSIKLNVLLGVPSTILQFINAMQHNGVHINIEKVVFTGESLKTFQKKIIRQAFGEQVSIVGVYGSSEGGILGFTNSPCHTEYEFLSDKYFIEKEGDSILITSLTRENFTPLLRYRLGDTATLSMKGDKLYLTDIQREDMSFNFMGNLIGLGIIQQTIKQTLGRSLEIQVHLSVTEERKELVTVFVQASEVDEDERVRIETAIADIPDIKEAYQKNQGTVSVLRKDARDYAVSERGKMLYIIDRRN</sequence>
<geneLocation type="plasmid">
    <name>pIAA1</name>
</geneLocation>
<organism>
    <name type="scientific">Pseudomonas savastanoi</name>
    <name type="common">Pseudomonas syringae pv. savastanoi</name>
    <dbReference type="NCBI Taxonomy" id="29438"/>
    <lineage>
        <taxon>Bacteria</taxon>
        <taxon>Pseudomonadati</taxon>
        <taxon>Pseudomonadota</taxon>
        <taxon>Gammaproteobacteria</taxon>
        <taxon>Pseudomonadales</taxon>
        <taxon>Pseudomonadaceae</taxon>
        <taxon>Pseudomonas</taxon>
    </lineage>
</organism>
<proteinExistence type="inferred from homology"/>
<keyword id="KW-0067">ATP-binding</keyword>
<keyword id="KW-0073">Auxin biosynthesis</keyword>
<keyword id="KW-0436">Ligase</keyword>
<keyword id="KW-0547">Nucleotide-binding</keyword>
<keyword id="KW-0614">Plasmid</keyword>
<feature type="chain" id="PRO_0000193102" description="Indoleacetate--lysine synthetase">
    <location>
        <begin position="1"/>
        <end position="395"/>
    </location>
</feature>
<protein>
    <recommendedName>
        <fullName>Indoleacetate--lysine synthetase</fullName>
        <ecNumber>6.3.2.20</ecNumber>
    </recommendedName>
    <alternativeName>
        <fullName>IAA-lysine synthetase</fullName>
    </alternativeName>
    <alternativeName>
        <fullName>Indoleacetate--lysine ligase</fullName>
    </alternativeName>
    <alternativeName>
        <fullName>N-(Indole-3-acetyl)-L-lysine synthetase</fullName>
    </alternativeName>
</protein>
<gene>
    <name type="primary">iaaL</name>
</gene>
<comment type="function">
    <text>Conversion of IAA to IAA-lysine.</text>
</comment>
<comment type="catalytic activity">
    <reaction>
        <text>(indol-3-yl)acetate + L-lysine + ATP = N(6)-[(indole-3-yl)acetyl]-L-lysine + ADP + phosphate + H(+)</text>
        <dbReference type="Rhea" id="RHEA:14857"/>
        <dbReference type="ChEBI" id="CHEBI:15378"/>
        <dbReference type="ChEBI" id="CHEBI:30616"/>
        <dbReference type="ChEBI" id="CHEBI:30854"/>
        <dbReference type="ChEBI" id="CHEBI:32551"/>
        <dbReference type="ChEBI" id="CHEBI:43474"/>
        <dbReference type="ChEBI" id="CHEBI:58105"/>
        <dbReference type="ChEBI" id="CHEBI:456216"/>
        <dbReference type="EC" id="6.3.2.20"/>
    </reaction>
</comment>
<comment type="similarity">
    <text evidence="1">Belongs to the ATP-dependent AMP-binding enzyme family.</text>
</comment>